<name>ARLY_XANP2</name>
<reference key="1">
    <citation type="submission" date="2007-07" db="EMBL/GenBank/DDBJ databases">
        <title>Complete sequence of chromosome of Xanthobacter autotrophicus Py2.</title>
        <authorList>
            <consortium name="US DOE Joint Genome Institute"/>
            <person name="Copeland A."/>
            <person name="Lucas S."/>
            <person name="Lapidus A."/>
            <person name="Barry K."/>
            <person name="Glavina del Rio T."/>
            <person name="Hammon N."/>
            <person name="Israni S."/>
            <person name="Dalin E."/>
            <person name="Tice H."/>
            <person name="Pitluck S."/>
            <person name="Sims D."/>
            <person name="Brettin T."/>
            <person name="Bruce D."/>
            <person name="Detter J.C."/>
            <person name="Han C."/>
            <person name="Tapia R."/>
            <person name="Brainard J."/>
            <person name="Schmutz J."/>
            <person name="Larimer F."/>
            <person name="Land M."/>
            <person name="Hauser L."/>
            <person name="Kyrpides N."/>
            <person name="Kim E."/>
            <person name="Ensigns S.A."/>
            <person name="Richardson P."/>
        </authorList>
    </citation>
    <scope>NUCLEOTIDE SEQUENCE [LARGE SCALE GENOMIC DNA]</scope>
    <source>
        <strain>ATCC BAA-1158 / Py2</strain>
    </source>
</reference>
<dbReference type="EC" id="4.3.2.1" evidence="1"/>
<dbReference type="EMBL" id="CP000781">
    <property type="protein sequence ID" value="ABS66983.1"/>
    <property type="molecule type" value="Genomic_DNA"/>
</dbReference>
<dbReference type="SMR" id="A7IG40"/>
<dbReference type="STRING" id="78245.Xaut_1738"/>
<dbReference type="KEGG" id="xau:Xaut_1738"/>
<dbReference type="eggNOG" id="COG0165">
    <property type="taxonomic scope" value="Bacteria"/>
</dbReference>
<dbReference type="HOGENOM" id="CLU_027272_2_3_5"/>
<dbReference type="OrthoDB" id="9769623at2"/>
<dbReference type="PhylomeDB" id="A7IG40"/>
<dbReference type="UniPathway" id="UPA00068">
    <property type="reaction ID" value="UER00114"/>
</dbReference>
<dbReference type="Proteomes" id="UP000002417">
    <property type="component" value="Chromosome"/>
</dbReference>
<dbReference type="GO" id="GO:0005829">
    <property type="term" value="C:cytosol"/>
    <property type="evidence" value="ECO:0007669"/>
    <property type="project" value="TreeGrafter"/>
</dbReference>
<dbReference type="GO" id="GO:0004056">
    <property type="term" value="F:argininosuccinate lyase activity"/>
    <property type="evidence" value="ECO:0007669"/>
    <property type="project" value="UniProtKB-UniRule"/>
</dbReference>
<dbReference type="GO" id="GO:0042450">
    <property type="term" value="P:arginine biosynthetic process via ornithine"/>
    <property type="evidence" value="ECO:0007669"/>
    <property type="project" value="InterPro"/>
</dbReference>
<dbReference type="GO" id="GO:0006526">
    <property type="term" value="P:L-arginine biosynthetic process"/>
    <property type="evidence" value="ECO:0007669"/>
    <property type="project" value="UniProtKB-UniRule"/>
</dbReference>
<dbReference type="CDD" id="cd01359">
    <property type="entry name" value="Argininosuccinate_lyase"/>
    <property type="match status" value="1"/>
</dbReference>
<dbReference type="FunFam" id="1.10.275.10:FF:000002">
    <property type="entry name" value="Argininosuccinate lyase"/>
    <property type="match status" value="1"/>
</dbReference>
<dbReference type="FunFam" id="1.10.40.30:FF:000001">
    <property type="entry name" value="Argininosuccinate lyase"/>
    <property type="match status" value="1"/>
</dbReference>
<dbReference type="FunFam" id="1.20.200.10:FF:000015">
    <property type="entry name" value="argininosuccinate lyase isoform X2"/>
    <property type="match status" value="1"/>
</dbReference>
<dbReference type="Gene3D" id="1.10.40.30">
    <property type="entry name" value="Fumarase/aspartase (C-terminal domain)"/>
    <property type="match status" value="1"/>
</dbReference>
<dbReference type="Gene3D" id="1.20.200.10">
    <property type="entry name" value="Fumarase/aspartase (Central domain)"/>
    <property type="match status" value="1"/>
</dbReference>
<dbReference type="Gene3D" id="1.10.275.10">
    <property type="entry name" value="Fumarase/aspartase (N-terminal domain)"/>
    <property type="match status" value="1"/>
</dbReference>
<dbReference type="HAMAP" id="MF_00006">
    <property type="entry name" value="Arg_succ_lyase"/>
    <property type="match status" value="1"/>
</dbReference>
<dbReference type="InterPro" id="IPR029419">
    <property type="entry name" value="Arg_succ_lyase_C"/>
</dbReference>
<dbReference type="InterPro" id="IPR009049">
    <property type="entry name" value="Argininosuccinate_lyase"/>
</dbReference>
<dbReference type="InterPro" id="IPR024083">
    <property type="entry name" value="Fumarase/histidase_N"/>
</dbReference>
<dbReference type="InterPro" id="IPR020557">
    <property type="entry name" value="Fumarate_lyase_CS"/>
</dbReference>
<dbReference type="InterPro" id="IPR000362">
    <property type="entry name" value="Fumarate_lyase_fam"/>
</dbReference>
<dbReference type="InterPro" id="IPR022761">
    <property type="entry name" value="Fumarate_lyase_N"/>
</dbReference>
<dbReference type="InterPro" id="IPR008948">
    <property type="entry name" value="L-Aspartase-like"/>
</dbReference>
<dbReference type="NCBIfam" id="TIGR00838">
    <property type="entry name" value="argH"/>
    <property type="match status" value="1"/>
</dbReference>
<dbReference type="PANTHER" id="PTHR43814">
    <property type="entry name" value="ARGININOSUCCINATE LYASE"/>
    <property type="match status" value="1"/>
</dbReference>
<dbReference type="PANTHER" id="PTHR43814:SF1">
    <property type="entry name" value="ARGININOSUCCINATE LYASE"/>
    <property type="match status" value="1"/>
</dbReference>
<dbReference type="Pfam" id="PF14698">
    <property type="entry name" value="ASL_C2"/>
    <property type="match status" value="1"/>
</dbReference>
<dbReference type="Pfam" id="PF00206">
    <property type="entry name" value="Lyase_1"/>
    <property type="match status" value="1"/>
</dbReference>
<dbReference type="PRINTS" id="PR00145">
    <property type="entry name" value="ARGSUCLYASE"/>
</dbReference>
<dbReference type="PRINTS" id="PR00149">
    <property type="entry name" value="FUMRATELYASE"/>
</dbReference>
<dbReference type="SUPFAM" id="SSF48557">
    <property type="entry name" value="L-aspartase-like"/>
    <property type="match status" value="1"/>
</dbReference>
<dbReference type="PROSITE" id="PS00163">
    <property type="entry name" value="FUMARATE_LYASES"/>
    <property type="match status" value="1"/>
</dbReference>
<protein>
    <recommendedName>
        <fullName evidence="1">Argininosuccinate lyase</fullName>
        <shortName evidence="1">ASAL</shortName>
        <ecNumber evidence="1">4.3.2.1</ecNumber>
    </recommendedName>
    <alternativeName>
        <fullName evidence="1">Arginosuccinase</fullName>
    </alternativeName>
</protein>
<feature type="chain" id="PRO_1000089132" description="Argininosuccinate lyase">
    <location>
        <begin position="1"/>
        <end position="462"/>
    </location>
</feature>
<keyword id="KW-0028">Amino-acid biosynthesis</keyword>
<keyword id="KW-0055">Arginine biosynthesis</keyword>
<keyword id="KW-0963">Cytoplasm</keyword>
<keyword id="KW-0456">Lyase</keyword>
<keyword id="KW-1185">Reference proteome</keyword>
<comment type="catalytic activity">
    <reaction evidence="1">
        <text>2-(N(omega)-L-arginino)succinate = fumarate + L-arginine</text>
        <dbReference type="Rhea" id="RHEA:24020"/>
        <dbReference type="ChEBI" id="CHEBI:29806"/>
        <dbReference type="ChEBI" id="CHEBI:32682"/>
        <dbReference type="ChEBI" id="CHEBI:57472"/>
        <dbReference type="EC" id="4.3.2.1"/>
    </reaction>
</comment>
<comment type="pathway">
    <text evidence="1">Amino-acid biosynthesis; L-arginine biosynthesis; L-arginine from L-ornithine and carbamoyl phosphate: step 3/3.</text>
</comment>
<comment type="subcellular location">
    <subcellularLocation>
        <location evidence="1">Cytoplasm</location>
    </subcellularLocation>
</comment>
<comment type="similarity">
    <text evidence="1">Belongs to the lyase 1 family. Argininosuccinate lyase subfamily.</text>
</comment>
<accession>A7IG40</accession>
<proteinExistence type="inferred from homology"/>
<organism>
    <name type="scientific">Xanthobacter autotrophicus (strain ATCC BAA-1158 / Py2)</name>
    <dbReference type="NCBI Taxonomy" id="78245"/>
    <lineage>
        <taxon>Bacteria</taxon>
        <taxon>Pseudomonadati</taxon>
        <taxon>Pseudomonadota</taxon>
        <taxon>Alphaproteobacteria</taxon>
        <taxon>Hyphomicrobiales</taxon>
        <taxon>Xanthobacteraceae</taxon>
        <taxon>Xanthobacter</taxon>
    </lineage>
</organism>
<sequence>MSNKMWGGRFTSAPDAIMEEINASIGFDQRLYAQDIAGSKAHAKMLAAQGIVAAQDADRIAEGLDTILSEIEAGNFTFKRELEDIHMNVESRLAELIGASAGRLHTARSRNDQVATDFRLYVRDTLDALDAQLADLQRALAEKALAHAATVMPGFTHLQTAQPVTFGHHLMAYVEMVARDRGRLADARKRLNECPLGSAALAGTSFPIDRDATAKALGFDRPTANSLDAVSDRDFVMETLSAASICAVHLSRFAEEVVIWTSPSFALVKLSDKFTTGSSIMPQKRNPDAAELVRAKAGRIIGALTGILVVMKGLPLAYAKDMQEDKEGAFDAFSALSLVVAASAGMVRDIVPDEKRMEKAAGQGYSTATDLADWLVRALNIPFREAHHITGRIVGLASDRGIALHKLSLDDMQGVDARITQDVFSVLSVVRSVRSRVSYGGTAPTRVRTQAKRWLKKLGVPA</sequence>
<evidence type="ECO:0000255" key="1">
    <source>
        <dbReference type="HAMAP-Rule" id="MF_00006"/>
    </source>
</evidence>
<gene>
    <name evidence="1" type="primary">argH</name>
    <name type="ordered locus">Xaut_1738</name>
</gene>